<reference key="1">
    <citation type="journal article" date="2004" name="Cell">
        <title>RTP family members induce functional expression of mammalian odorant receptors.</title>
        <authorList>
            <person name="Saito H."/>
            <person name="Kubota M."/>
            <person name="Roberts R.W."/>
            <person name="Chi Q."/>
            <person name="Matsunami H."/>
        </authorList>
    </citation>
    <scope>NUCLEOTIDE SEQUENCE [MRNA] (ISOFORM 2)</scope>
</reference>
<reference key="2">
    <citation type="journal article" date="2016" name="Am. J. Hum. Genet.">
        <title>Mutations in REEP6 cause autosomal-recessive retinitis pigmentosa.</title>
        <authorList>
            <consortium name="UKIRDC"/>
            <person name="Arno G."/>
            <person name="Agrawal S.A."/>
            <person name="Eblimit A."/>
            <person name="Bellingham J."/>
            <person name="Xu M."/>
            <person name="Wang F."/>
            <person name="Chakarova C."/>
            <person name="Parfitt D.A."/>
            <person name="Lane A."/>
            <person name="Burgoyne T."/>
            <person name="Hull S."/>
            <person name="Carss K.J."/>
            <person name="Fiorentino A."/>
            <person name="Hayes M.J."/>
            <person name="Munro P.M."/>
            <person name="Nicols R."/>
            <person name="Pontikos N."/>
            <person name="Holder G.E."/>
            <person name="Asomugha C."/>
            <person name="Raymond F.L."/>
            <person name="Moore A.T."/>
            <person name="Plagnol V."/>
            <person name="Michaelides M."/>
            <person name="Hardcastle A.J."/>
            <person name="Li Y."/>
            <person name="Cukras C."/>
            <person name="Webster A.R."/>
            <person name="Cheetham M.E."/>
            <person name="Chen R."/>
        </authorList>
    </citation>
    <scope>NUCLEOTIDE SEQUENCE [MRNA] (ISOFORM 1)</scope>
    <scope>FUNCTION</scope>
    <scope>SUBCELLULAR LOCATION</scope>
    <scope>TISSUE SPECIFICITY (ISOFORM 1)</scope>
    <scope>INVOLVEMENT IN RP77</scope>
    <scope>VARIANTS RP77 LEU-128 AND PRO-135</scope>
    <scope>CHARACTERIZATION OF VARIANTS RP77 LEU-128 AND PRO-135</scope>
</reference>
<reference key="3">
    <citation type="journal article" date="2004" name="Nat. Genet.">
        <title>Complete sequencing and characterization of 21,243 full-length human cDNAs.</title>
        <authorList>
            <person name="Ota T."/>
            <person name="Suzuki Y."/>
            <person name="Nishikawa T."/>
            <person name="Otsuki T."/>
            <person name="Sugiyama T."/>
            <person name="Irie R."/>
            <person name="Wakamatsu A."/>
            <person name="Hayashi K."/>
            <person name="Sato H."/>
            <person name="Nagai K."/>
            <person name="Kimura K."/>
            <person name="Makita H."/>
            <person name="Sekine M."/>
            <person name="Obayashi M."/>
            <person name="Nishi T."/>
            <person name="Shibahara T."/>
            <person name="Tanaka T."/>
            <person name="Ishii S."/>
            <person name="Yamamoto J."/>
            <person name="Saito K."/>
            <person name="Kawai Y."/>
            <person name="Isono Y."/>
            <person name="Nakamura Y."/>
            <person name="Nagahari K."/>
            <person name="Murakami K."/>
            <person name="Yasuda T."/>
            <person name="Iwayanagi T."/>
            <person name="Wagatsuma M."/>
            <person name="Shiratori A."/>
            <person name="Sudo H."/>
            <person name="Hosoiri T."/>
            <person name="Kaku Y."/>
            <person name="Kodaira H."/>
            <person name="Kondo H."/>
            <person name="Sugawara M."/>
            <person name="Takahashi M."/>
            <person name="Kanda K."/>
            <person name="Yokoi T."/>
            <person name="Furuya T."/>
            <person name="Kikkawa E."/>
            <person name="Omura Y."/>
            <person name="Abe K."/>
            <person name="Kamihara K."/>
            <person name="Katsuta N."/>
            <person name="Sato K."/>
            <person name="Tanikawa M."/>
            <person name="Yamazaki M."/>
            <person name="Ninomiya K."/>
            <person name="Ishibashi T."/>
            <person name="Yamashita H."/>
            <person name="Murakawa K."/>
            <person name="Fujimori K."/>
            <person name="Tanai H."/>
            <person name="Kimata M."/>
            <person name="Watanabe M."/>
            <person name="Hiraoka S."/>
            <person name="Chiba Y."/>
            <person name="Ishida S."/>
            <person name="Ono Y."/>
            <person name="Takiguchi S."/>
            <person name="Watanabe S."/>
            <person name="Yosida M."/>
            <person name="Hotuta T."/>
            <person name="Kusano J."/>
            <person name="Kanehori K."/>
            <person name="Takahashi-Fujii A."/>
            <person name="Hara H."/>
            <person name="Tanase T.-O."/>
            <person name="Nomura Y."/>
            <person name="Togiya S."/>
            <person name="Komai F."/>
            <person name="Hara R."/>
            <person name="Takeuchi K."/>
            <person name="Arita M."/>
            <person name="Imose N."/>
            <person name="Musashino K."/>
            <person name="Yuuki H."/>
            <person name="Oshima A."/>
            <person name="Sasaki N."/>
            <person name="Aotsuka S."/>
            <person name="Yoshikawa Y."/>
            <person name="Matsunawa H."/>
            <person name="Ichihara T."/>
            <person name="Shiohata N."/>
            <person name="Sano S."/>
            <person name="Moriya S."/>
            <person name="Momiyama H."/>
            <person name="Satoh N."/>
            <person name="Takami S."/>
            <person name="Terashima Y."/>
            <person name="Suzuki O."/>
            <person name="Nakagawa S."/>
            <person name="Senoh A."/>
            <person name="Mizoguchi H."/>
            <person name="Goto Y."/>
            <person name="Shimizu F."/>
            <person name="Wakebe H."/>
            <person name="Hishigaki H."/>
            <person name="Watanabe T."/>
            <person name="Sugiyama A."/>
            <person name="Takemoto M."/>
            <person name="Kawakami B."/>
            <person name="Yamazaki M."/>
            <person name="Watanabe K."/>
            <person name="Kumagai A."/>
            <person name="Itakura S."/>
            <person name="Fukuzumi Y."/>
            <person name="Fujimori Y."/>
            <person name="Komiyama M."/>
            <person name="Tashiro H."/>
            <person name="Tanigami A."/>
            <person name="Fujiwara T."/>
            <person name="Ono T."/>
            <person name="Yamada K."/>
            <person name="Fujii Y."/>
            <person name="Ozaki K."/>
            <person name="Hirao M."/>
            <person name="Ohmori Y."/>
            <person name="Kawabata A."/>
            <person name="Hikiji T."/>
            <person name="Kobatake N."/>
            <person name="Inagaki H."/>
            <person name="Ikema Y."/>
            <person name="Okamoto S."/>
            <person name="Okitani R."/>
            <person name="Kawakami T."/>
            <person name="Noguchi S."/>
            <person name="Itoh T."/>
            <person name="Shigeta K."/>
            <person name="Senba T."/>
            <person name="Matsumura K."/>
            <person name="Nakajima Y."/>
            <person name="Mizuno T."/>
            <person name="Morinaga M."/>
            <person name="Sasaki M."/>
            <person name="Togashi T."/>
            <person name="Oyama M."/>
            <person name="Hata H."/>
            <person name="Watanabe M."/>
            <person name="Komatsu T."/>
            <person name="Mizushima-Sugano J."/>
            <person name="Satoh T."/>
            <person name="Shirai Y."/>
            <person name="Takahashi Y."/>
            <person name="Nakagawa K."/>
            <person name="Okumura K."/>
            <person name="Nagase T."/>
            <person name="Nomura N."/>
            <person name="Kikuchi H."/>
            <person name="Masuho Y."/>
            <person name="Yamashita R."/>
            <person name="Nakai K."/>
            <person name="Yada T."/>
            <person name="Nakamura Y."/>
            <person name="Ohara O."/>
            <person name="Isogai T."/>
            <person name="Sugano S."/>
        </authorList>
    </citation>
    <scope>NUCLEOTIDE SEQUENCE [LARGE SCALE MRNA] (ISOFORM 2)</scope>
    <source>
        <tissue>Liver</tissue>
        <tissue>Testis</tissue>
    </source>
</reference>
<reference key="4">
    <citation type="journal article" date="2004" name="Nature">
        <title>The DNA sequence and biology of human chromosome 19.</title>
        <authorList>
            <person name="Grimwood J."/>
            <person name="Gordon L.A."/>
            <person name="Olsen A.S."/>
            <person name="Terry A."/>
            <person name="Schmutz J."/>
            <person name="Lamerdin J.E."/>
            <person name="Hellsten U."/>
            <person name="Goodstein D."/>
            <person name="Couronne O."/>
            <person name="Tran-Gyamfi M."/>
            <person name="Aerts A."/>
            <person name="Altherr M."/>
            <person name="Ashworth L."/>
            <person name="Bajorek E."/>
            <person name="Black S."/>
            <person name="Branscomb E."/>
            <person name="Caenepeel S."/>
            <person name="Carrano A.V."/>
            <person name="Caoile C."/>
            <person name="Chan Y.M."/>
            <person name="Christensen M."/>
            <person name="Cleland C.A."/>
            <person name="Copeland A."/>
            <person name="Dalin E."/>
            <person name="Dehal P."/>
            <person name="Denys M."/>
            <person name="Detter J.C."/>
            <person name="Escobar J."/>
            <person name="Flowers D."/>
            <person name="Fotopulos D."/>
            <person name="Garcia C."/>
            <person name="Georgescu A.M."/>
            <person name="Glavina T."/>
            <person name="Gomez M."/>
            <person name="Gonzales E."/>
            <person name="Groza M."/>
            <person name="Hammon N."/>
            <person name="Hawkins T."/>
            <person name="Haydu L."/>
            <person name="Ho I."/>
            <person name="Huang W."/>
            <person name="Israni S."/>
            <person name="Jett J."/>
            <person name="Kadner K."/>
            <person name="Kimball H."/>
            <person name="Kobayashi A."/>
            <person name="Larionov V."/>
            <person name="Leem S.-H."/>
            <person name="Lopez F."/>
            <person name="Lou Y."/>
            <person name="Lowry S."/>
            <person name="Malfatti S."/>
            <person name="Martinez D."/>
            <person name="McCready P.M."/>
            <person name="Medina C."/>
            <person name="Morgan J."/>
            <person name="Nelson K."/>
            <person name="Nolan M."/>
            <person name="Ovcharenko I."/>
            <person name="Pitluck S."/>
            <person name="Pollard M."/>
            <person name="Popkie A.P."/>
            <person name="Predki P."/>
            <person name="Quan G."/>
            <person name="Ramirez L."/>
            <person name="Rash S."/>
            <person name="Retterer J."/>
            <person name="Rodriguez A."/>
            <person name="Rogers S."/>
            <person name="Salamov A."/>
            <person name="Salazar A."/>
            <person name="She X."/>
            <person name="Smith D."/>
            <person name="Slezak T."/>
            <person name="Solovyev V."/>
            <person name="Thayer N."/>
            <person name="Tice H."/>
            <person name="Tsai M."/>
            <person name="Ustaszewska A."/>
            <person name="Vo N."/>
            <person name="Wagner M."/>
            <person name="Wheeler J."/>
            <person name="Wu K."/>
            <person name="Xie G."/>
            <person name="Yang J."/>
            <person name="Dubchak I."/>
            <person name="Furey T.S."/>
            <person name="DeJong P."/>
            <person name="Dickson M."/>
            <person name="Gordon D."/>
            <person name="Eichler E.E."/>
            <person name="Pennacchio L.A."/>
            <person name="Richardson P."/>
            <person name="Stubbs L."/>
            <person name="Rokhsar D.S."/>
            <person name="Myers R.M."/>
            <person name="Rubin E.M."/>
            <person name="Lucas S.M."/>
        </authorList>
    </citation>
    <scope>NUCLEOTIDE SEQUENCE [LARGE SCALE GENOMIC DNA]</scope>
</reference>
<reference key="5">
    <citation type="submission" date="2005-09" db="EMBL/GenBank/DDBJ databases">
        <authorList>
            <person name="Mural R.J."/>
            <person name="Istrail S."/>
            <person name="Sutton G.G."/>
            <person name="Florea L."/>
            <person name="Halpern A.L."/>
            <person name="Mobarry C.M."/>
            <person name="Lippert R."/>
            <person name="Walenz B."/>
            <person name="Shatkay H."/>
            <person name="Dew I."/>
            <person name="Miller J.R."/>
            <person name="Flanigan M.J."/>
            <person name="Edwards N.J."/>
            <person name="Bolanos R."/>
            <person name="Fasulo D."/>
            <person name="Halldorsson B.V."/>
            <person name="Hannenhalli S."/>
            <person name="Turner R."/>
            <person name="Yooseph S."/>
            <person name="Lu F."/>
            <person name="Nusskern D.R."/>
            <person name="Shue B.C."/>
            <person name="Zheng X.H."/>
            <person name="Zhong F."/>
            <person name="Delcher A.L."/>
            <person name="Huson D.H."/>
            <person name="Kravitz S.A."/>
            <person name="Mouchard L."/>
            <person name="Reinert K."/>
            <person name="Remington K.A."/>
            <person name="Clark A.G."/>
            <person name="Waterman M.S."/>
            <person name="Eichler E.E."/>
            <person name="Adams M.D."/>
            <person name="Hunkapiller M.W."/>
            <person name="Myers E.W."/>
            <person name="Venter J.C."/>
        </authorList>
    </citation>
    <scope>NUCLEOTIDE SEQUENCE [LARGE SCALE GENOMIC DNA]</scope>
</reference>
<reference key="6">
    <citation type="journal article" date="2004" name="Genome Res.">
        <title>The status, quality, and expansion of the NIH full-length cDNA project: the Mammalian Gene Collection (MGC).</title>
        <authorList>
            <consortium name="The MGC Project Team"/>
        </authorList>
    </citation>
    <scope>NUCLEOTIDE SEQUENCE [LARGE SCALE MRNA] (ISOFORM 2)</scope>
    <source>
        <tissue>Eye</tissue>
    </source>
</reference>
<reference key="7">
    <citation type="journal article" date="2006" name="J. Biol. Chem.">
        <title>Members of RTP and REEP gene families influence functional bitter taste receptor expression.</title>
        <authorList>
            <person name="Behrens M."/>
            <person name="Bartelt J."/>
            <person name="Reichling C."/>
            <person name="Winnig M."/>
            <person name="Kuhn C."/>
            <person name="Meyerhof W."/>
        </authorList>
    </citation>
    <scope>TISSUE SPECIFICITY</scope>
</reference>
<reference key="8">
    <citation type="journal article" date="2011" name="BMC Syst. Biol.">
        <title>Initial characterization of the human central proteome.</title>
        <authorList>
            <person name="Burkard T.R."/>
            <person name="Planyavsky M."/>
            <person name="Kaupe I."/>
            <person name="Breitwieser F.P."/>
            <person name="Buerckstuemmer T."/>
            <person name="Bennett K.L."/>
            <person name="Superti-Furga G."/>
            <person name="Colinge J."/>
        </authorList>
    </citation>
    <scope>IDENTIFICATION BY MASS SPECTROMETRY [LARGE SCALE ANALYSIS]</scope>
</reference>
<reference key="9">
    <citation type="journal article" date="2013" name="PLoS ONE">
        <title>REEPs are membrane shaping adapter proteins that modulate specific G protein-coupled receptor trafficking by affecting ER cargo capacity.</title>
        <authorList>
            <person name="Bjork S."/>
            <person name="Hurt C.M."/>
            <person name="Ho V.K."/>
            <person name="Angelotti T."/>
        </authorList>
    </citation>
    <scope>SUBCELLULAR LOCATION</scope>
</reference>
<reference key="10">
    <citation type="journal article" date="2015" name="Proteomics">
        <title>N-terminome analysis of the human mitochondrial proteome.</title>
        <authorList>
            <person name="Vaca Jacome A.S."/>
            <person name="Rabilloud T."/>
            <person name="Schaeffer-Reiss C."/>
            <person name="Rompais M."/>
            <person name="Ayoub D."/>
            <person name="Lane L."/>
            <person name="Bairoch A."/>
            <person name="Van Dorsselaer A."/>
            <person name="Carapito C."/>
        </authorList>
    </citation>
    <scope>IDENTIFICATION BY MASS SPECTROMETRY [LARGE SCALE ANALYSIS]</scope>
</reference>
<reference key="11">
    <citation type="journal article" date="2017" name="Hum. Mol. Genet.">
        <title>REEP6 mediates trafficking of a subset of Clathrin-coated vesicles and is critical for rod photoreceptor function and survival.</title>
        <authorList>
            <person name="Veleri S."/>
            <person name="Nellissery J."/>
            <person name="Mishra B."/>
            <person name="Manjunath S.H."/>
            <person name="Brooks M.J."/>
            <person name="Dong L."/>
            <person name="Nagashima K."/>
            <person name="Qian H."/>
            <person name="Gao C."/>
            <person name="Sergeev Y.V."/>
            <person name="Huang X.F."/>
            <person name="Qu J."/>
            <person name="Lu F."/>
            <person name="Cideciyan A.V."/>
            <person name="Li T."/>
            <person name="Jin Z.B."/>
            <person name="Fariss R.N."/>
            <person name="Ratnapriya R."/>
            <person name="Jacobson S.G."/>
            <person name="Swaroop A."/>
        </authorList>
    </citation>
    <scope>VARIANT RP77 LYS-75</scope>
</reference>
<reference key="12">
    <citation type="journal article" date="2018" name="Clin. Genet.">
        <title>A novel nonsense variant in REEP6 is involved in a sporadic rod-cone dystrophy case.</title>
        <authorList>
            <person name="Mejecase C."/>
            <person name="Mohand-Said S."/>
            <person name="El Shamieh S."/>
            <person name="Antonio A."/>
            <person name="Condroyer C."/>
            <person name="Blanchard S."/>
            <person name="Letexier M."/>
            <person name="Saraiva J.P."/>
            <person name="Sahel J.A."/>
            <person name="Audo I."/>
            <person name="Zeitz C."/>
        </authorList>
    </citation>
    <scope>VARIANT RP77 89-TRP--LYS-211 DEL</scope>
</reference>
<accession>Q96HR9</accession>
<accession>A0A1L5BXV3</accession>
<accession>B2RE01</accession>
<accession>D6W5Z0</accession>
<accession>Q96LM0</accession>
<protein>
    <recommendedName>
        <fullName>Receptor expression-enhancing protein 6</fullName>
    </recommendedName>
    <alternativeName>
        <fullName>Polyposis locus protein 1-like 1</fullName>
    </alternativeName>
</protein>
<name>REEP6_HUMAN</name>
<gene>
    <name type="primary">REEP6</name>
    <name type="synonym">C19orf32</name>
    <name type="synonym">DP1L1</name>
</gene>
<dbReference type="EMBL" id="AY562244">
    <property type="protein sequence ID" value="AAT70689.1"/>
    <property type="molecule type" value="mRNA"/>
</dbReference>
<dbReference type="EMBL" id="KX268612">
    <property type="protein sequence ID" value="APL98237.1"/>
    <property type="molecule type" value="mRNA"/>
</dbReference>
<dbReference type="EMBL" id="AK058112">
    <property type="protein sequence ID" value="BAB71670.1"/>
    <property type="molecule type" value="mRNA"/>
</dbReference>
<dbReference type="EMBL" id="AK315744">
    <property type="protein sequence ID" value="BAG38098.1"/>
    <property type="molecule type" value="mRNA"/>
</dbReference>
<dbReference type="EMBL" id="AC027307">
    <property type="status" value="NOT_ANNOTATED_CDS"/>
    <property type="molecule type" value="Genomic_DNA"/>
</dbReference>
<dbReference type="EMBL" id="CH471139">
    <property type="protein sequence ID" value="EAW69491.1"/>
    <property type="molecule type" value="Genomic_DNA"/>
</dbReference>
<dbReference type="EMBL" id="CH471139">
    <property type="protein sequence ID" value="EAW69492.1"/>
    <property type="molecule type" value="Genomic_DNA"/>
</dbReference>
<dbReference type="EMBL" id="CH471139">
    <property type="protein sequence ID" value="EAW69493.1"/>
    <property type="molecule type" value="Genomic_DNA"/>
</dbReference>
<dbReference type="EMBL" id="BC008201">
    <property type="protein sequence ID" value="AAH08201.1"/>
    <property type="molecule type" value="mRNA"/>
</dbReference>
<dbReference type="CCDS" id="CCDS12070.1">
    <molecule id="Q96HR9-2"/>
</dbReference>
<dbReference type="CCDS" id="CCDS92481.1">
    <molecule id="Q96HR9-1"/>
</dbReference>
<dbReference type="RefSeq" id="NP_001316485.1">
    <molecule id="Q96HR9-1"/>
    <property type="nucleotide sequence ID" value="NM_001329556.3"/>
</dbReference>
<dbReference type="RefSeq" id="NP_612402.1">
    <molecule id="Q96HR9-2"/>
    <property type="nucleotide sequence ID" value="NM_138393.4"/>
</dbReference>
<dbReference type="BioGRID" id="124983">
    <property type="interactions" value="130"/>
</dbReference>
<dbReference type="FunCoup" id="Q96HR9">
    <property type="interactions" value="960"/>
</dbReference>
<dbReference type="IntAct" id="Q96HR9">
    <property type="interactions" value="118"/>
</dbReference>
<dbReference type="MINT" id="Q96HR9"/>
<dbReference type="STRING" id="9606.ENSP00000233596"/>
<dbReference type="TCDB" id="8.A.108.1.9">
    <property type="family name" value="the curvature-stabilizing protein yop1 (yop1) family"/>
</dbReference>
<dbReference type="iPTMnet" id="Q96HR9"/>
<dbReference type="PhosphoSitePlus" id="Q96HR9"/>
<dbReference type="SwissPalm" id="Q96HR9"/>
<dbReference type="BioMuta" id="REEP6"/>
<dbReference type="DMDM" id="74762661"/>
<dbReference type="jPOST" id="Q96HR9"/>
<dbReference type="MassIVE" id="Q96HR9"/>
<dbReference type="PeptideAtlas" id="Q96HR9"/>
<dbReference type="ProteomicsDB" id="76780"/>
<dbReference type="Pumba" id="Q96HR9"/>
<dbReference type="Antibodypedia" id="10563">
    <property type="antibodies" value="46 antibodies from 14 providers"/>
</dbReference>
<dbReference type="DNASU" id="92840"/>
<dbReference type="Ensembl" id="ENST00000233596.8">
    <molecule id="Q96HR9-2"/>
    <property type="protein sequence ID" value="ENSP00000233596.2"/>
    <property type="gene ID" value="ENSG00000115255.12"/>
</dbReference>
<dbReference type="Ensembl" id="ENST00000395479.10">
    <molecule id="Q96HR9-1"/>
    <property type="protein sequence ID" value="ENSP00000378861.5"/>
    <property type="gene ID" value="ENSG00000115255.12"/>
</dbReference>
<dbReference type="GeneID" id="92840"/>
<dbReference type="KEGG" id="hsa:92840"/>
<dbReference type="MANE-Select" id="ENST00000233596.8">
    <molecule id="Q96HR9-2"/>
    <property type="protein sequence ID" value="ENSP00000233596.2"/>
    <property type="RefSeq nucleotide sequence ID" value="NM_138393.4"/>
    <property type="RefSeq protein sequence ID" value="NP_612402.1"/>
</dbReference>
<dbReference type="UCSC" id="uc002ltc.4">
    <molecule id="Q96HR9-1"/>
    <property type="organism name" value="human"/>
</dbReference>
<dbReference type="AGR" id="HGNC:30078"/>
<dbReference type="CTD" id="92840"/>
<dbReference type="DisGeNET" id="92840"/>
<dbReference type="GeneCards" id="REEP6"/>
<dbReference type="HGNC" id="HGNC:30078">
    <property type="gene designation" value="REEP6"/>
</dbReference>
<dbReference type="HPA" id="ENSG00000115255">
    <property type="expression patterns" value="Tissue enhanced (intestine, liver, testis)"/>
</dbReference>
<dbReference type="MalaCards" id="REEP6"/>
<dbReference type="MIM" id="609346">
    <property type="type" value="gene"/>
</dbReference>
<dbReference type="MIM" id="617304">
    <property type="type" value="phenotype"/>
</dbReference>
<dbReference type="neXtProt" id="NX_Q96HR9"/>
<dbReference type="OpenTargets" id="ENSG00000115255"/>
<dbReference type="Orphanet" id="791">
    <property type="disease" value="Retinitis pigmentosa"/>
</dbReference>
<dbReference type="PharmGKB" id="PA134892881"/>
<dbReference type="VEuPathDB" id="HostDB:ENSG00000115255"/>
<dbReference type="GeneTree" id="ENSGT00940000161493"/>
<dbReference type="HOGENOM" id="CLU_028431_2_0_1"/>
<dbReference type="InParanoid" id="Q96HR9"/>
<dbReference type="OMA" id="CMIPGPW"/>
<dbReference type="OrthoDB" id="10009287at2759"/>
<dbReference type="PAN-GO" id="Q96HR9">
    <property type="GO annotations" value="0 GO annotations based on evolutionary models"/>
</dbReference>
<dbReference type="PhylomeDB" id="Q96HR9"/>
<dbReference type="TreeFam" id="TF314913"/>
<dbReference type="PathwayCommons" id="Q96HR9"/>
<dbReference type="SignaLink" id="Q96HR9"/>
<dbReference type="BioGRID-ORCS" id="92840">
    <property type="hits" value="16 hits in 1160 CRISPR screens"/>
</dbReference>
<dbReference type="GenomeRNAi" id="92840"/>
<dbReference type="Pharos" id="Q96HR9">
    <property type="development level" value="Tbio"/>
</dbReference>
<dbReference type="PRO" id="PR:Q96HR9"/>
<dbReference type="Proteomes" id="UP000005640">
    <property type="component" value="Chromosome 19"/>
</dbReference>
<dbReference type="RNAct" id="Q96HR9">
    <property type="molecule type" value="protein"/>
</dbReference>
<dbReference type="Bgee" id="ENSG00000115255">
    <property type="expression patterns" value="Expressed in right testis and 116 other cell types or tissues"/>
</dbReference>
<dbReference type="ExpressionAtlas" id="Q96HR9">
    <property type="expression patterns" value="baseline and differential"/>
</dbReference>
<dbReference type="GO" id="GO:0030665">
    <property type="term" value="C:clathrin-coated vesicle membrane"/>
    <property type="evidence" value="ECO:0007669"/>
    <property type="project" value="UniProtKB-SubCell"/>
</dbReference>
<dbReference type="GO" id="GO:0005783">
    <property type="term" value="C:endoplasmic reticulum"/>
    <property type="evidence" value="ECO:0000314"/>
    <property type="project" value="HPA"/>
</dbReference>
<dbReference type="GO" id="GO:0005789">
    <property type="term" value="C:endoplasmic reticulum membrane"/>
    <property type="evidence" value="ECO:0007669"/>
    <property type="project" value="UniProtKB-SubCell"/>
</dbReference>
<dbReference type="GO" id="GO:0005634">
    <property type="term" value="C:nucleus"/>
    <property type="evidence" value="ECO:0007005"/>
    <property type="project" value="UniProtKB"/>
</dbReference>
<dbReference type="GO" id="GO:0001917">
    <property type="term" value="C:photoreceptor inner segment"/>
    <property type="evidence" value="ECO:0000314"/>
    <property type="project" value="UniProtKB"/>
</dbReference>
<dbReference type="GO" id="GO:0050908">
    <property type="term" value="P:detection of light stimulus involved in visual perception"/>
    <property type="evidence" value="ECO:0000315"/>
    <property type="project" value="UniProtKB"/>
</dbReference>
<dbReference type="GO" id="GO:0007029">
    <property type="term" value="P:endoplasmic reticulum organization"/>
    <property type="evidence" value="ECO:0000250"/>
    <property type="project" value="FlyBase"/>
</dbReference>
<dbReference type="GO" id="GO:0032386">
    <property type="term" value="P:regulation of intracellular transport"/>
    <property type="evidence" value="ECO:0000250"/>
    <property type="project" value="FlyBase"/>
</dbReference>
<dbReference type="InterPro" id="IPR004345">
    <property type="entry name" value="TB2_DP1_HVA22"/>
</dbReference>
<dbReference type="PANTHER" id="PTHR12300">
    <property type="entry name" value="HVA22-LIKE PROTEINS"/>
    <property type="match status" value="1"/>
</dbReference>
<dbReference type="PANTHER" id="PTHR12300:SF133">
    <property type="entry name" value="RECEPTOR EXPRESSION-ENHANCING PROTEIN 6"/>
    <property type="match status" value="1"/>
</dbReference>
<dbReference type="Pfam" id="PF03134">
    <property type="entry name" value="TB2_DP1_HVA22"/>
    <property type="match status" value="1"/>
</dbReference>
<sequence length="211" mass="23418">MDGLRQRVEHFLEQRNLVTEVLGALEAKTGVEKRYLAAGAVTLLSLYLLFGYGASLLCNLIGFVYPAYASIKAIESPSKDDDTVWLTYWVVYALFGLAEFFSDLLLSWFPFYYVGKCAFLLFCMAPRPWNGALMLYQRVVRPLFLRHHGAVDRIMNDLSGRALDAAAGITRNVLQVLARSRAGITPVAVAGPSTPLEADLKPSQTPQPKDK</sequence>
<comment type="function">
    <text evidence="1 6">Required for correct function and survival of retinal photoreceptors (PubMed:27889058). Required for retinal development (By similarity). In rod photoreceptors, facilitates stability and/or trafficking of guanylate cyclases and is required to maintain endoplasmic reticulum and mitochondrial homeostasis (By similarity). May play a role in clathrin-coated intracellular vesicle trafficking of proteins from the endoplasmic reticulum to the retinal rod plasma membrane (By similarity).</text>
</comment>
<comment type="subunit">
    <text evidence="1">Interacts with STX3 (By similarity). Interacts with clathrin (By similarity).</text>
</comment>
<comment type="interaction">
    <interactant intactId="EBI-750345">
        <id>Q96HR9</id>
    </interactant>
    <interactant intactId="EBI-745535">
        <id>Q8NI60</id>
        <label>COQ8A</label>
    </interactant>
    <organismsDiffer>false</organismsDiffer>
    <experiments>9</experiments>
</comment>
<comment type="interaction">
    <interactant intactId="EBI-750345">
        <id>Q96HR9</id>
    </interactant>
    <interactant intactId="EBI-742137">
        <id>Q8N612</id>
        <label>FHIP1B</label>
    </interactant>
    <organismsDiffer>false</organismsDiffer>
    <experiments>4</experiments>
</comment>
<comment type="interaction">
    <interactant intactId="EBI-750345">
        <id>Q96HR9</id>
    </interactant>
    <interactant intactId="EBI-2549423">
        <id>Q6NT76</id>
        <label>HMBOX1</label>
    </interactant>
    <organismsDiffer>false</organismsDiffer>
    <experiments>3</experiments>
</comment>
<comment type="interaction">
    <interactant intactId="EBI-750345">
        <id>Q96HR9</id>
    </interactant>
    <interactant intactId="EBI-10212206">
        <id>Q6NT76-2</id>
        <label>HMBOX1</label>
    </interactant>
    <organismsDiffer>false</organismsDiffer>
    <experiments>3</experiments>
</comment>
<comment type="interaction">
    <interactant intactId="EBI-750345">
        <id>Q96HR9</id>
    </interactant>
    <interactant intactId="EBI-80475">
        <id>P31785</id>
        <label>IL2RG</label>
    </interactant>
    <organismsDiffer>false</organismsDiffer>
    <experiments>3</experiments>
</comment>
<comment type="interaction">
    <interactant intactId="EBI-750345">
        <id>Q96HR9</id>
    </interactant>
    <interactant intactId="EBI-725647">
        <id>Q99732</id>
        <label>LITAF</label>
    </interactant>
    <organismsDiffer>false</organismsDiffer>
    <experiments>8</experiments>
</comment>
<comment type="interaction">
    <interactant intactId="EBI-750345">
        <id>Q96HR9</id>
    </interactant>
    <interactant intactId="EBI-10250413">
        <id>Q6IQ43</id>
        <label>PTPN9</label>
    </interactant>
    <organismsDiffer>false</organismsDiffer>
    <experiments>3</experiments>
</comment>
<comment type="interaction">
    <interactant intactId="EBI-750345">
        <id>Q96HR9</id>
    </interactant>
    <interactant intactId="EBI-727004">
        <id>O00560</id>
        <label>SDCBP</label>
    </interactant>
    <organismsDiffer>false</organismsDiffer>
    <experiments>3</experiments>
</comment>
<comment type="interaction">
    <interactant intactId="EBI-750345">
        <id>Q96HR9</id>
    </interactant>
    <interactant intactId="EBI-2822329">
        <id>Q13596</id>
        <label>SNX1</label>
    </interactant>
    <organismsDiffer>false</organismsDiffer>
    <experiments>4</experiments>
</comment>
<comment type="interaction">
    <interactant intactId="EBI-750345">
        <id>Q96HR9</id>
    </interactant>
    <interactant intactId="EBI-725924">
        <id>Q9NRS6</id>
        <label>SNX15</label>
    </interactant>
    <organismsDiffer>false</organismsDiffer>
    <experiments>5</experiments>
</comment>
<comment type="interaction">
    <interactant intactId="EBI-750345">
        <id>Q96HR9</id>
    </interactant>
    <interactant intactId="EBI-742688">
        <id>Q9NZD8</id>
        <label>SPG21</label>
    </interactant>
    <organismsDiffer>false</organismsDiffer>
    <experiments>4</experiments>
</comment>
<comment type="interaction">
    <interactant intactId="EBI-750345">
        <id>Q96HR9</id>
    </interactant>
    <interactant intactId="EBI-949753">
        <id>Q63HR2</id>
        <label>TNS2</label>
    </interactant>
    <organismsDiffer>false</organismsDiffer>
    <experiments>3</experiments>
</comment>
<comment type="interaction">
    <interactant intactId="EBI-750345">
        <id>Q96HR9</id>
    </interactant>
    <interactant intactId="EBI-2932492">
        <id>Q99757</id>
        <label>TXN2</label>
    </interactant>
    <organismsDiffer>false</organismsDiffer>
    <experiments>3</experiments>
</comment>
<comment type="interaction">
    <interactant intactId="EBI-750345">
        <id>Q96HR9</id>
    </interactant>
    <interactant intactId="EBI-2849569">
        <id>Q9BQ24</id>
        <label>ZFYVE21</label>
    </interactant>
    <organismsDiffer>false</organismsDiffer>
    <experiments>3</experiments>
</comment>
<comment type="interaction">
    <interactant intactId="EBI-750345">
        <id>Q96HR9</id>
    </interactant>
    <interactant intactId="EBI-25475897">
        <id>P0DTC6</id>
        <label>6</label>
    </interactant>
    <organismsDiffer>true</organismsDiffer>
    <experiments>4</experiments>
</comment>
<comment type="interaction">
    <interactant intactId="EBI-14065960">
        <id>Q96HR9-2</id>
    </interactant>
    <interactant intactId="EBI-714543">
        <id>Q15041</id>
        <label>ARL6IP1</label>
    </interactant>
    <organismsDiffer>false</organismsDiffer>
    <experiments>3</experiments>
</comment>
<comment type="interaction">
    <interactant intactId="EBI-14065960">
        <id>Q96HR9-2</id>
    </interactant>
    <interactant intactId="EBI-2606700">
        <id>P18859</id>
        <label>ATP5PF</label>
    </interactant>
    <organismsDiffer>false</organismsDiffer>
    <experiments>3</experiments>
</comment>
<comment type="interaction">
    <interactant intactId="EBI-14065960">
        <id>Q96HR9-2</id>
    </interactant>
    <interactant intactId="EBI-6624398">
        <id>P06307</id>
        <label>CCK</label>
    </interactant>
    <organismsDiffer>false</organismsDiffer>
    <experiments>3</experiments>
</comment>
<comment type="interaction">
    <interactant intactId="EBI-14065960">
        <id>Q96HR9-2</id>
    </interactant>
    <interactant intactId="EBI-7797864">
        <id>P11912</id>
        <label>CD79A</label>
    </interactant>
    <organismsDiffer>false</organismsDiffer>
    <experiments>3</experiments>
</comment>
<comment type="interaction">
    <interactant intactId="EBI-14065960">
        <id>Q96HR9-2</id>
    </interactant>
    <interactant intactId="EBI-295634">
        <id>Q16543</id>
        <label>CDC37</label>
    </interactant>
    <organismsDiffer>false</organismsDiffer>
    <experiments>3</experiments>
</comment>
<comment type="interaction">
    <interactant intactId="EBI-14065960">
        <id>Q96HR9-2</id>
    </interactant>
    <interactant intactId="EBI-11156432">
        <id>Q9Y5P4-2</id>
        <label>CERT1</label>
    </interactant>
    <organismsDiffer>false</organismsDiffer>
    <experiments>3</experiments>
</comment>
<comment type="interaction">
    <interactant intactId="EBI-14065960">
        <id>Q96HR9-2</id>
    </interactant>
    <interactant intactId="EBI-745535">
        <id>Q8NI60</id>
        <label>COQ8A</label>
    </interactant>
    <organismsDiffer>false</organismsDiffer>
    <experiments>3</experiments>
</comment>
<comment type="interaction">
    <interactant intactId="EBI-14065960">
        <id>Q96HR9-2</id>
    </interactant>
    <interactant intactId="EBI-8646596">
        <id>P49447</id>
        <label>CYB561</label>
    </interactant>
    <organismsDiffer>false</organismsDiffer>
    <experiments>3</experiments>
</comment>
<comment type="interaction">
    <interactant intactId="EBI-14065960">
        <id>Q96HR9-2</id>
    </interactant>
    <interactant intactId="EBI-8787095">
        <id>O00559</id>
        <label>EBAG9</label>
    </interactant>
    <organismsDiffer>false</organismsDiffer>
    <experiments>3</experiments>
</comment>
<comment type="interaction">
    <interactant intactId="EBI-14065960">
        <id>Q96HR9-2</id>
    </interactant>
    <interactant intactId="EBI-2339219">
        <id>Q08426</id>
        <label>EHHADH</label>
    </interactant>
    <organismsDiffer>false</organismsDiffer>
    <experiments>3</experiments>
</comment>
<comment type="interaction">
    <interactant intactId="EBI-14065960">
        <id>Q96HR9-2</id>
    </interactant>
    <interactant intactId="EBI-17458373">
        <id>P48165</id>
        <label>GJA8</label>
    </interactant>
    <organismsDiffer>false</organismsDiffer>
    <experiments>3</experiments>
</comment>
<comment type="interaction">
    <interactant intactId="EBI-14065960">
        <id>Q96HR9-2</id>
    </interactant>
    <interactant intactId="EBI-13345167">
        <id>Q8TDT2</id>
        <label>GPR152</label>
    </interactant>
    <organismsDiffer>false</organismsDiffer>
    <experiments>3</experiments>
</comment>
<comment type="interaction">
    <interactant intactId="EBI-14065960">
        <id>Q96HR9-2</id>
    </interactant>
    <interactant intactId="EBI-18053395">
        <id>Q7Z5P4</id>
        <label>HSD17B13</label>
    </interactant>
    <organismsDiffer>false</organismsDiffer>
    <experiments>3</experiments>
</comment>
<comment type="interaction">
    <interactant intactId="EBI-14065960">
        <id>Q96HR9-2</id>
    </interactant>
    <interactant intactId="EBI-9996449">
        <id>Q9BYR8</id>
        <label>KRTAP3-1</label>
    </interactant>
    <organismsDiffer>false</organismsDiffer>
    <experiments>3</experiments>
</comment>
<comment type="interaction">
    <interactant intactId="EBI-14065960">
        <id>Q96HR9-2</id>
    </interactant>
    <interactant intactId="EBI-21591415">
        <id>P13473-2</id>
        <label>LAMP2</label>
    </interactant>
    <organismsDiffer>false</organismsDiffer>
    <experiments>3</experiments>
</comment>
<comment type="interaction">
    <interactant intactId="EBI-14065960">
        <id>Q96HR9-2</id>
    </interactant>
    <interactant intactId="EBI-750776">
        <id>O95214</id>
        <label>LEPROTL1</label>
    </interactant>
    <organismsDiffer>false</organismsDiffer>
    <experiments>3</experiments>
</comment>
<comment type="interaction">
    <interactant intactId="EBI-14065960">
        <id>Q96HR9-2</id>
    </interactant>
    <interactant intactId="EBI-725647">
        <id>Q99732</id>
        <label>LITAF</label>
    </interactant>
    <organismsDiffer>false</organismsDiffer>
    <experiments>3</experiments>
</comment>
<comment type="interaction">
    <interactant intactId="EBI-14065960">
        <id>Q96HR9-2</id>
    </interactant>
    <interactant intactId="EBI-739832">
        <id>Q8TBB1</id>
        <label>LNX1</label>
    </interactant>
    <organismsDiffer>false</organismsDiffer>
    <experiments>3</experiments>
</comment>
<comment type="interaction">
    <interactant intactId="EBI-14065960">
        <id>Q96HR9-2</id>
    </interactant>
    <interactant intactId="EBI-740987">
        <id>Q9NQG6</id>
        <label>MIEF1</label>
    </interactant>
    <organismsDiffer>false</organismsDiffer>
    <experiments>3</experiments>
</comment>
<comment type="interaction">
    <interactant intactId="EBI-14065960">
        <id>Q96HR9-2</id>
    </interactant>
    <interactant intactId="EBI-11988931">
        <id>Q96C03-3</id>
        <label>MIEF2</label>
    </interactant>
    <organismsDiffer>false</organismsDiffer>
    <experiments>3</experiments>
</comment>
<comment type="interaction">
    <interactant intactId="EBI-14065960">
        <id>Q96HR9-2</id>
    </interactant>
    <interactant intactId="EBI-709754">
        <id>Q9HB07</id>
        <label>MYG1</label>
    </interactant>
    <organismsDiffer>false</organismsDiffer>
    <experiments>3</experiments>
</comment>
<comment type="interaction">
    <interactant intactId="EBI-14065960">
        <id>Q96HR9-2</id>
    </interactant>
    <interactant intactId="EBI-11978907">
        <id>Q9ULP0-2</id>
        <label>NDRG4</label>
    </interactant>
    <organismsDiffer>false</organismsDiffer>
    <experiments>7</experiments>
</comment>
<comment type="interaction">
    <interactant intactId="EBI-14065960">
        <id>Q96HR9-2</id>
    </interactant>
    <interactant intactId="EBI-741158">
        <id>Q96HA8</id>
        <label>NTAQ1</label>
    </interactant>
    <organismsDiffer>false</organismsDiffer>
    <experiments>3</experiments>
</comment>
<comment type="interaction">
    <interactant intactId="EBI-14065960">
        <id>Q96HR9-2</id>
    </interactant>
    <interactant intactId="EBI-11749425">
        <id>Q01968-2</id>
        <label>OCRL</label>
    </interactant>
    <organismsDiffer>false</organismsDiffer>
    <experiments>3</experiments>
</comment>
<comment type="interaction">
    <interactant intactId="EBI-14065960">
        <id>Q96HR9-2</id>
    </interactant>
    <interactant intactId="EBI-79165">
        <id>Q9NRD5</id>
        <label>PICK1</label>
    </interactant>
    <organismsDiffer>false</organismsDiffer>
    <experiments>3</experiments>
</comment>
<comment type="interaction">
    <interactant intactId="EBI-14065960">
        <id>Q96HR9-2</id>
    </interactant>
    <interactant intactId="EBI-742898">
        <id>P43378</id>
        <label>PTPN9</label>
    </interactant>
    <organismsDiffer>false</organismsDiffer>
    <experiments>3</experiments>
</comment>
<comment type="interaction">
    <interactant intactId="EBI-14065960">
        <id>Q96HR9-2</id>
    </interactant>
    <interactant intactId="EBI-10192441">
        <id>Q86VR2</id>
        <label>RETREG3</label>
    </interactant>
    <organismsDiffer>false</organismsDiffer>
    <experiments>3</experiments>
</comment>
<comment type="interaction">
    <interactant intactId="EBI-14065960">
        <id>Q96HR9-2</id>
    </interactant>
    <interactant intactId="EBI-727004">
        <id>O00560</id>
        <label>SDCBP</label>
    </interactant>
    <organismsDiffer>false</organismsDiffer>
    <experiments>3</experiments>
</comment>
<comment type="interaction">
    <interactant intactId="EBI-14065960">
        <id>Q96HR9-2</id>
    </interactant>
    <interactant intactId="EBI-2623095">
        <id>Q9Y371</id>
        <label>SH3GLB1</label>
    </interactant>
    <organismsDiffer>false</organismsDiffer>
    <experiments>3</experiments>
</comment>
<comment type="interaction">
    <interactant intactId="EBI-14065960">
        <id>Q96HR9-2</id>
    </interactant>
    <interactant intactId="EBI-10262251">
        <id>Q8IWU4</id>
        <label>SLC30A8</label>
    </interactant>
    <organismsDiffer>false</organismsDiffer>
    <experiments>3</experiments>
</comment>
<comment type="interaction">
    <interactant intactId="EBI-14065960">
        <id>Q96HR9-2</id>
    </interactant>
    <interactant intactId="EBI-2822329">
        <id>Q13596</id>
        <label>SNX1</label>
    </interactant>
    <organismsDiffer>false</organismsDiffer>
    <experiments>3</experiments>
</comment>
<comment type="interaction">
    <interactant intactId="EBI-14065960">
        <id>Q96HR9-2</id>
    </interactant>
    <interactant intactId="EBI-10329449">
        <id>Q9Y5W9</id>
        <label>SNX11</label>
    </interactant>
    <organismsDiffer>false</organismsDiffer>
    <experiments>3</experiments>
</comment>
<comment type="interaction">
    <interactant intactId="EBI-14065960">
        <id>Q96HR9-2</id>
    </interactant>
    <interactant intactId="EBI-22419305">
        <id>Q9UMY4-1</id>
        <label>SNX12</label>
    </interactant>
    <organismsDiffer>false</organismsDiffer>
    <experiments>3</experiments>
</comment>
<comment type="interaction">
    <interactant intactId="EBI-14065960">
        <id>Q96HR9-2</id>
    </interactant>
    <interactant intactId="EBI-725924">
        <id>Q9NRS6</id>
        <label>SNX15</label>
    </interactant>
    <organismsDiffer>false</organismsDiffer>
    <experiments>3</experiments>
</comment>
<comment type="interaction">
    <interactant intactId="EBI-14065960">
        <id>Q96HR9-2</id>
    </interactant>
    <interactant intactId="EBI-1752557">
        <id>Q9Y5X2</id>
        <label>SNX8</label>
    </interactant>
    <organismsDiffer>false</organismsDiffer>
    <experiments>3</experiments>
</comment>
<comment type="interaction">
    <interactant intactId="EBI-14065960">
        <id>Q96HR9-2</id>
    </interactant>
    <interactant intactId="EBI-742688">
        <id>Q9NZD8</id>
        <label>SPG21</label>
    </interactant>
    <organismsDiffer>false</organismsDiffer>
    <experiments>3</experiments>
</comment>
<comment type="interaction">
    <interactant intactId="EBI-14065960">
        <id>Q96HR9-2</id>
    </interactant>
    <interactant intactId="EBI-2800345">
        <id>Q86WV6</id>
        <label>STING1</label>
    </interactant>
    <organismsDiffer>false</organismsDiffer>
    <experiments>3</experiments>
</comment>
<comment type="interaction">
    <interactant intactId="EBI-14065960">
        <id>Q96HR9-2</id>
    </interactant>
    <interactant intactId="EBI-10238936">
        <id>Q17RD7</id>
        <label>SYT16</label>
    </interactant>
    <organismsDiffer>false</organismsDiffer>
    <experiments>3</experiments>
</comment>
<comment type="interaction">
    <interactant intactId="EBI-14065960">
        <id>Q96HR9-2</id>
    </interactant>
    <interactant intactId="EBI-12947623">
        <id>Q96MV1</id>
        <label>TLCD4</label>
    </interactant>
    <organismsDiffer>false</organismsDiffer>
    <experiments>3</experiments>
</comment>
<comment type="interaction">
    <interactant intactId="EBI-14065960">
        <id>Q96HR9-2</id>
    </interactant>
    <interactant intactId="EBI-11603430">
        <id>Q6PL24</id>
        <label>TMED8</label>
    </interactant>
    <organismsDiffer>false</organismsDiffer>
    <experiments>3</experiments>
</comment>
<comment type="interaction">
    <interactant intactId="EBI-14065960">
        <id>Q96HR9-2</id>
    </interactant>
    <interactant intactId="EBI-13342951">
        <id>Q96AN5</id>
        <label>TMEM143</label>
    </interactant>
    <organismsDiffer>false</organismsDiffer>
    <experiments>3</experiments>
</comment>
<comment type="interaction">
    <interactant intactId="EBI-14065960">
        <id>Q96HR9-2</id>
    </interactant>
    <interactant intactId="EBI-11724433">
        <id>Q6ZT21</id>
        <label>TMPPE</label>
    </interactant>
    <organismsDiffer>false</organismsDiffer>
    <experiments>3</experiments>
</comment>
<comment type="interaction">
    <interactant intactId="EBI-14065960">
        <id>Q96HR9-2</id>
    </interactant>
    <interactant intactId="EBI-2932492">
        <id>Q99757</id>
        <label>TXN2</label>
    </interactant>
    <organismsDiffer>false</organismsDiffer>
    <experiments>3</experiments>
</comment>
<comment type="interaction">
    <interactant intactId="EBI-14065960">
        <id>Q96HR9-2</id>
    </interactant>
    <interactant intactId="EBI-12205107">
        <id>Q9Y4P8-4</id>
        <label>WIPI2</label>
    </interactant>
    <organismsDiffer>false</organismsDiffer>
    <experiments>3</experiments>
</comment>
<comment type="interaction">
    <interactant intactId="EBI-14065960">
        <id>Q96HR9-2</id>
    </interactant>
    <interactant intactId="EBI-2849569">
        <id>Q9BQ24</id>
        <label>ZFYVE21</label>
    </interactant>
    <organismsDiffer>false</organismsDiffer>
    <experiments>3</experiments>
</comment>
<comment type="subcellular location">
    <subcellularLocation>
        <location evidence="5 6">Endoplasmic reticulum membrane</location>
        <topology evidence="2">Multi-pass membrane protein</topology>
    </subcellularLocation>
    <subcellularLocation>
        <location evidence="1">Cytoplasmic vesicle</location>
        <location evidence="1">Clathrin-coated vesicle membrane</location>
        <topology evidence="2">Multi-pass membrane protein</topology>
    </subcellularLocation>
</comment>
<comment type="alternative products">
    <event type="alternative splicing"/>
    <isoform>
        <id>Q96HR9-1</id>
        <name>1</name>
        <sequence type="displayed"/>
    </isoform>
    <isoform>
        <id>Q96HR9-2</id>
        <name>2</name>
        <sequence type="described" ref="VSP_058885"/>
    </isoform>
</comment>
<comment type="tissue specificity">
    <text evidence="4 6">Expressed in circumvallate papillae and testis (PubMed:16720576). Expressed in the retina. Isoform 1 is predominantly present in mature optic cups. Isoform 1 expression is confined to the cell body and inner segment of developing rod photoreceptor cells (PubMed:27889058).</text>
</comment>
<comment type="disease" evidence="6 7 8">
    <disease id="DI-04926">
        <name>Retinitis pigmentosa 77</name>
        <acronym>RP77</acronym>
        <description>A form of retinitis pigmentosa, a retinal dystrophy belonging to the group of pigmentary retinopathies. Retinitis pigmentosa is characterized by retinal pigment deposits visible on fundus examination and primary loss of rod photoreceptor cells followed by secondary loss of cone photoreceptors. Patients typically have night vision blindness and loss of midperipheral visual field. As their condition progresses, they lose their far peripheral visual field and eventually central vision as well. RP77 inheritance is autosomal recessive.</description>
        <dbReference type="MIM" id="617304"/>
    </disease>
    <text>The disease is caused by variants affecting the gene represented in this entry.</text>
</comment>
<comment type="similarity">
    <text evidence="9">Belongs to the DP1 family.</text>
</comment>
<evidence type="ECO:0000250" key="1">
    <source>
        <dbReference type="UniProtKB" id="Q9JM62"/>
    </source>
</evidence>
<evidence type="ECO:0000255" key="2"/>
<evidence type="ECO:0000256" key="3">
    <source>
        <dbReference type="SAM" id="MobiDB-lite"/>
    </source>
</evidence>
<evidence type="ECO:0000269" key="4">
    <source>
    </source>
</evidence>
<evidence type="ECO:0000269" key="5">
    <source>
    </source>
</evidence>
<evidence type="ECO:0000269" key="6">
    <source>
    </source>
</evidence>
<evidence type="ECO:0000269" key="7">
    <source>
    </source>
</evidence>
<evidence type="ECO:0000269" key="8">
    <source>
    </source>
</evidence>
<evidence type="ECO:0000305" key="9"/>
<feature type="chain" id="PRO_0000101818" description="Receptor expression-enhancing protein 6">
    <location>
        <begin position="1"/>
        <end position="211"/>
    </location>
</feature>
<feature type="transmembrane region" description="Helical" evidence="2">
    <location>
        <begin position="44"/>
        <end position="64"/>
    </location>
</feature>
<feature type="transmembrane region" description="Helical" evidence="2">
    <location>
        <begin position="89"/>
        <end position="109"/>
    </location>
</feature>
<feature type="region of interest" description="Disordered" evidence="3">
    <location>
        <begin position="190"/>
        <end position="211"/>
    </location>
</feature>
<feature type="compositionally biased region" description="Polar residues" evidence="3">
    <location>
        <begin position="202"/>
        <end position="211"/>
    </location>
</feature>
<feature type="splice variant" id="VSP_058885" description="In isoform 2.">
    <location>
        <begin position="174"/>
        <end position="200"/>
    </location>
</feature>
<feature type="sequence variant" id="VAR_081396" description="In RP77; dbSNP:rs144942685." evidence="7">
    <original>E</original>
    <variation>K</variation>
    <location>
        <position position="75"/>
    </location>
</feature>
<feature type="sequence variant" id="VAR_081397" description="In RP77; uncertain significance; dbSNP:rs761786834." evidence="8">
    <location>
        <begin position="89"/>
        <end position="211"/>
    </location>
</feature>
<feature type="sequence variant" id="VAR_077931" description="In RP77; decreased protein levels; does not affect localization to endoplasmic reticulum; dbSNP:rs1057519317." evidence="6">
    <original>P</original>
    <variation>L</variation>
    <location>
        <position position="128"/>
    </location>
</feature>
<feature type="sequence variant" id="VAR_077932" description="In RP77; decreased protein levels; does not affect localization to endoplasmic reticulum; loss of rod photoreceptor function shown by a mouse knockin model of the mutation; dbSNP:rs1057519316." evidence="6">
    <original>L</original>
    <variation>P</variation>
    <location>
        <position position="135"/>
    </location>
</feature>
<feature type="sequence variant" id="VAR_048927" description="In dbSNP:rs2271412.">
    <original>A</original>
    <variation>D</variation>
    <location>
        <position position="150"/>
    </location>
</feature>
<feature type="sequence conflict" description="In Ref. 3; BAB71670." evidence="9" ref="3">
    <original>T</original>
    <variation>A</variation>
    <location>
        <position position="42"/>
    </location>
</feature>
<keyword id="KW-0025">Alternative splicing</keyword>
<keyword id="KW-0968">Cytoplasmic vesicle</keyword>
<keyword id="KW-0225">Disease variant</keyword>
<keyword id="KW-0256">Endoplasmic reticulum</keyword>
<keyword id="KW-0472">Membrane</keyword>
<keyword id="KW-1267">Proteomics identification</keyword>
<keyword id="KW-1185">Reference proteome</keyword>
<keyword id="KW-0682">Retinitis pigmentosa</keyword>
<keyword id="KW-0812">Transmembrane</keyword>
<keyword id="KW-1133">Transmembrane helix</keyword>
<proteinExistence type="evidence at protein level"/>
<organism>
    <name type="scientific">Homo sapiens</name>
    <name type="common">Human</name>
    <dbReference type="NCBI Taxonomy" id="9606"/>
    <lineage>
        <taxon>Eukaryota</taxon>
        <taxon>Metazoa</taxon>
        <taxon>Chordata</taxon>
        <taxon>Craniata</taxon>
        <taxon>Vertebrata</taxon>
        <taxon>Euteleostomi</taxon>
        <taxon>Mammalia</taxon>
        <taxon>Eutheria</taxon>
        <taxon>Euarchontoglires</taxon>
        <taxon>Primates</taxon>
        <taxon>Haplorrhini</taxon>
        <taxon>Catarrhini</taxon>
        <taxon>Hominidae</taxon>
        <taxon>Homo</taxon>
    </lineage>
</organism>